<sequence length="329" mass="36942">METLFSGIQPSGIPTIGNYIGALKQFVDVQDDYECFFCIVDQHAITVPQDRLKLRKQIRQLAAIYLASGIDPDKSTLFIQSEVPAHVQAGWMLTTIASIGELERMTQFKDKAQKRADGVPAGLLTYPPLMAADIVIYNTNIVPVGDDQKQHMELTRNLVDRFNSRYNDVLVKPEVRMPKVGGRVMSLQDPTKKMSKSDDNQKNFISLLDEPHVAAKKIKSAVTDSDGIIKFDRENKPGISNLLSIYSGLTNDSIKNIESKYEGEGYGKFKGDLSEIVKDFLINFQEKYASFYNSDDLDDILDKGKEKAQKASFKTLKKMEKAMGLGRKR</sequence>
<organism>
    <name type="scientific">Staphylococcus epidermidis (strain ATCC 35984 / DSM 28319 / BCRC 17069 / CCUG 31568 / BM 3577 / RP62A)</name>
    <dbReference type="NCBI Taxonomy" id="176279"/>
    <lineage>
        <taxon>Bacteria</taxon>
        <taxon>Bacillati</taxon>
        <taxon>Bacillota</taxon>
        <taxon>Bacilli</taxon>
        <taxon>Bacillales</taxon>
        <taxon>Staphylococcaceae</taxon>
        <taxon>Staphylococcus</taxon>
    </lineage>
</organism>
<accession>Q5HQH4</accession>
<keyword id="KW-0030">Aminoacyl-tRNA synthetase</keyword>
<keyword id="KW-0067">ATP-binding</keyword>
<keyword id="KW-0963">Cytoplasm</keyword>
<keyword id="KW-0436">Ligase</keyword>
<keyword id="KW-0547">Nucleotide-binding</keyword>
<keyword id="KW-0648">Protein biosynthesis</keyword>
<keyword id="KW-1185">Reference proteome</keyword>
<comment type="function">
    <text evidence="1">Catalyzes the attachment of tryptophan to tRNA(Trp).</text>
</comment>
<comment type="catalytic activity">
    <reaction evidence="1">
        <text>tRNA(Trp) + L-tryptophan + ATP = L-tryptophyl-tRNA(Trp) + AMP + diphosphate + H(+)</text>
        <dbReference type="Rhea" id="RHEA:24080"/>
        <dbReference type="Rhea" id="RHEA-COMP:9671"/>
        <dbReference type="Rhea" id="RHEA-COMP:9705"/>
        <dbReference type="ChEBI" id="CHEBI:15378"/>
        <dbReference type="ChEBI" id="CHEBI:30616"/>
        <dbReference type="ChEBI" id="CHEBI:33019"/>
        <dbReference type="ChEBI" id="CHEBI:57912"/>
        <dbReference type="ChEBI" id="CHEBI:78442"/>
        <dbReference type="ChEBI" id="CHEBI:78535"/>
        <dbReference type="ChEBI" id="CHEBI:456215"/>
        <dbReference type="EC" id="6.1.1.2"/>
    </reaction>
</comment>
<comment type="subunit">
    <text evidence="1">Homodimer.</text>
</comment>
<comment type="subcellular location">
    <subcellularLocation>
        <location evidence="1">Cytoplasm</location>
    </subcellularLocation>
</comment>
<comment type="similarity">
    <text evidence="1">Belongs to the class-I aminoacyl-tRNA synthetase family.</text>
</comment>
<dbReference type="EC" id="6.1.1.2" evidence="1"/>
<dbReference type="EMBL" id="CP000029">
    <property type="protein sequence ID" value="AAW53977.1"/>
    <property type="molecule type" value="Genomic_DNA"/>
</dbReference>
<dbReference type="RefSeq" id="WP_002446070.1">
    <property type="nucleotide sequence ID" value="NC_002976.3"/>
</dbReference>
<dbReference type="SMR" id="Q5HQH4"/>
<dbReference type="STRING" id="176279.SERP0575"/>
<dbReference type="KEGG" id="ser:SERP0575"/>
<dbReference type="eggNOG" id="COG0180">
    <property type="taxonomic scope" value="Bacteria"/>
</dbReference>
<dbReference type="HOGENOM" id="CLU_029244_1_1_9"/>
<dbReference type="Proteomes" id="UP000000531">
    <property type="component" value="Chromosome"/>
</dbReference>
<dbReference type="GO" id="GO:0005829">
    <property type="term" value="C:cytosol"/>
    <property type="evidence" value="ECO:0007669"/>
    <property type="project" value="TreeGrafter"/>
</dbReference>
<dbReference type="GO" id="GO:0005524">
    <property type="term" value="F:ATP binding"/>
    <property type="evidence" value="ECO:0007669"/>
    <property type="project" value="UniProtKB-UniRule"/>
</dbReference>
<dbReference type="GO" id="GO:0004830">
    <property type="term" value="F:tryptophan-tRNA ligase activity"/>
    <property type="evidence" value="ECO:0007669"/>
    <property type="project" value="UniProtKB-UniRule"/>
</dbReference>
<dbReference type="GO" id="GO:0006436">
    <property type="term" value="P:tryptophanyl-tRNA aminoacylation"/>
    <property type="evidence" value="ECO:0007669"/>
    <property type="project" value="UniProtKB-UniRule"/>
</dbReference>
<dbReference type="CDD" id="cd00806">
    <property type="entry name" value="TrpRS_core"/>
    <property type="match status" value="1"/>
</dbReference>
<dbReference type="FunFam" id="1.10.240.10:FF:000002">
    <property type="entry name" value="Tryptophan--tRNA ligase"/>
    <property type="match status" value="1"/>
</dbReference>
<dbReference type="Gene3D" id="3.40.50.620">
    <property type="entry name" value="HUPs"/>
    <property type="match status" value="1"/>
</dbReference>
<dbReference type="Gene3D" id="1.10.240.10">
    <property type="entry name" value="Tyrosyl-Transfer RNA Synthetase"/>
    <property type="match status" value="1"/>
</dbReference>
<dbReference type="HAMAP" id="MF_00140_B">
    <property type="entry name" value="Trp_tRNA_synth_B"/>
    <property type="match status" value="1"/>
</dbReference>
<dbReference type="InterPro" id="IPR001412">
    <property type="entry name" value="aa-tRNA-synth_I_CS"/>
</dbReference>
<dbReference type="InterPro" id="IPR002305">
    <property type="entry name" value="aa-tRNA-synth_Ic"/>
</dbReference>
<dbReference type="InterPro" id="IPR014729">
    <property type="entry name" value="Rossmann-like_a/b/a_fold"/>
</dbReference>
<dbReference type="InterPro" id="IPR002306">
    <property type="entry name" value="Trp-tRNA-ligase"/>
</dbReference>
<dbReference type="InterPro" id="IPR024109">
    <property type="entry name" value="Trp-tRNA-ligase_bac-type"/>
</dbReference>
<dbReference type="InterPro" id="IPR050203">
    <property type="entry name" value="Trp-tRNA_synthetase"/>
</dbReference>
<dbReference type="NCBIfam" id="TIGR00233">
    <property type="entry name" value="trpS"/>
    <property type="match status" value="1"/>
</dbReference>
<dbReference type="PANTHER" id="PTHR43766">
    <property type="entry name" value="TRYPTOPHAN--TRNA LIGASE, MITOCHONDRIAL"/>
    <property type="match status" value="1"/>
</dbReference>
<dbReference type="PANTHER" id="PTHR43766:SF1">
    <property type="entry name" value="TRYPTOPHAN--TRNA LIGASE, MITOCHONDRIAL"/>
    <property type="match status" value="1"/>
</dbReference>
<dbReference type="Pfam" id="PF00579">
    <property type="entry name" value="tRNA-synt_1b"/>
    <property type="match status" value="1"/>
</dbReference>
<dbReference type="PRINTS" id="PR01039">
    <property type="entry name" value="TRNASYNTHTRP"/>
</dbReference>
<dbReference type="SUPFAM" id="SSF52374">
    <property type="entry name" value="Nucleotidylyl transferase"/>
    <property type="match status" value="1"/>
</dbReference>
<dbReference type="PROSITE" id="PS00178">
    <property type="entry name" value="AA_TRNA_LIGASE_I"/>
    <property type="match status" value="1"/>
</dbReference>
<proteinExistence type="inferred from homology"/>
<feature type="chain" id="PRO_0000136682" description="Tryptophan--tRNA ligase">
    <location>
        <begin position="1"/>
        <end position="329"/>
    </location>
</feature>
<feature type="short sequence motif" description="'HIGH' region" evidence="1">
    <location>
        <begin position="10"/>
        <end position="18"/>
    </location>
</feature>
<feature type="short sequence motif" description="'KMSKS' region" evidence="1">
    <location>
        <begin position="193"/>
        <end position="197"/>
    </location>
</feature>
<feature type="binding site" evidence="1">
    <location>
        <begin position="9"/>
        <end position="11"/>
    </location>
    <ligand>
        <name>ATP</name>
        <dbReference type="ChEBI" id="CHEBI:30616"/>
    </ligand>
</feature>
<feature type="binding site" evidence="1">
    <location>
        <begin position="17"/>
        <end position="18"/>
    </location>
    <ligand>
        <name>ATP</name>
        <dbReference type="ChEBI" id="CHEBI:30616"/>
    </ligand>
</feature>
<feature type="binding site" evidence="1">
    <location>
        <position position="133"/>
    </location>
    <ligand>
        <name>L-tryptophan</name>
        <dbReference type="ChEBI" id="CHEBI:57912"/>
    </ligand>
</feature>
<feature type="binding site" evidence="1">
    <location>
        <begin position="145"/>
        <end position="147"/>
    </location>
    <ligand>
        <name>ATP</name>
        <dbReference type="ChEBI" id="CHEBI:30616"/>
    </ligand>
</feature>
<feature type="binding site" evidence="1">
    <location>
        <position position="184"/>
    </location>
    <ligand>
        <name>ATP</name>
        <dbReference type="ChEBI" id="CHEBI:30616"/>
    </ligand>
</feature>
<feature type="binding site" evidence="1">
    <location>
        <begin position="193"/>
        <end position="197"/>
    </location>
    <ligand>
        <name>ATP</name>
        <dbReference type="ChEBI" id="CHEBI:30616"/>
    </ligand>
</feature>
<name>SYW_STAEQ</name>
<protein>
    <recommendedName>
        <fullName evidence="1">Tryptophan--tRNA ligase</fullName>
        <ecNumber evidence="1">6.1.1.2</ecNumber>
    </recommendedName>
    <alternativeName>
        <fullName evidence="1">Tryptophanyl-tRNA synthetase</fullName>
        <shortName evidence="1">TrpRS</shortName>
    </alternativeName>
</protein>
<reference key="1">
    <citation type="journal article" date="2005" name="J. Bacteriol.">
        <title>Insights on evolution of virulence and resistance from the complete genome analysis of an early methicillin-resistant Staphylococcus aureus strain and a biofilm-producing methicillin-resistant Staphylococcus epidermidis strain.</title>
        <authorList>
            <person name="Gill S.R."/>
            <person name="Fouts D.E."/>
            <person name="Archer G.L."/>
            <person name="Mongodin E.F."/>
            <person name="DeBoy R.T."/>
            <person name="Ravel J."/>
            <person name="Paulsen I.T."/>
            <person name="Kolonay J.F."/>
            <person name="Brinkac L.M."/>
            <person name="Beanan M.J."/>
            <person name="Dodson R.J."/>
            <person name="Daugherty S.C."/>
            <person name="Madupu R."/>
            <person name="Angiuoli S.V."/>
            <person name="Durkin A.S."/>
            <person name="Haft D.H."/>
            <person name="Vamathevan J.J."/>
            <person name="Khouri H."/>
            <person name="Utterback T.R."/>
            <person name="Lee C."/>
            <person name="Dimitrov G."/>
            <person name="Jiang L."/>
            <person name="Qin H."/>
            <person name="Weidman J."/>
            <person name="Tran K."/>
            <person name="Kang K.H."/>
            <person name="Hance I.R."/>
            <person name="Nelson K.E."/>
            <person name="Fraser C.M."/>
        </authorList>
    </citation>
    <scope>NUCLEOTIDE SEQUENCE [LARGE SCALE GENOMIC DNA]</scope>
    <source>
        <strain>ATCC 35984 / DSM 28319 / BCRC 17069 / CCUG 31568 / BM 3577 / RP62A</strain>
    </source>
</reference>
<evidence type="ECO:0000255" key="1">
    <source>
        <dbReference type="HAMAP-Rule" id="MF_00140"/>
    </source>
</evidence>
<gene>
    <name evidence="1" type="primary">trpS</name>
    <name type="ordered locus">SERP0575</name>
</gene>